<accession>Q749B0</accession>
<protein>
    <recommendedName>
        <fullName evidence="1">Small ribosomal subunit protein uS13</fullName>
    </recommendedName>
    <alternativeName>
        <fullName evidence="3">30S ribosomal protein S13</fullName>
    </alternativeName>
</protein>
<sequence length="122" mass="13735">MARIAGIDLPRNKRIEIALTYIFGIGRTTAQRILAETGVSADTRTDNLAESEVAKIRDYIDKNLKVEGDLRRDVSMDIKRLMDLGCYRGLRHRKGLPVRGQRTKTNARTRKGPARTVAGKKK</sequence>
<organism>
    <name type="scientific">Geobacter sulfurreducens (strain ATCC 51573 / DSM 12127 / PCA)</name>
    <dbReference type="NCBI Taxonomy" id="243231"/>
    <lineage>
        <taxon>Bacteria</taxon>
        <taxon>Pseudomonadati</taxon>
        <taxon>Thermodesulfobacteriota</taxon>
        <taxon>Desulfuromonadia</taxon>
        <taxon>Geobacterales</taxon>
        <taxon>Geobacteraceae</taxon>
        <taxon>Geobacter</taxon>
    </lineage>
</organism>
<gene>
    <name evidence="1" type="primary">rpsM</name>
    <name type="ordered locus">GSU2834</name>
</gene>
<dbReference type="EMBL" id="AE017180">
    <property type="protein sequence ID" value="AAR36227.1"/>
    <property type="molecule type" value="Genomic_DNA"/>
</dbReference>
<dbReference type="RefSeq" id="NP_953877.1">
    <property type="nucleotide sequence ID" value="NC_002939.5"/>
</dbReference>
<dbReference type="RefSeq" id="WP_010943462.1">
    <property type="nucleotide sequence ID" value="NC_002939.5"/>
</dbReference>
<dbReference type="SMR" id="Q749B0"/>
<dbReference type="FunCoup" id="Q749B0">
    <property type="interactions" value="622"/>
</dbReference>
<dbReference type="STRING" id="243231.GSU2834"/>
<dbReference type="EnsemblBacteria" id="AAR36227">
    <property type="protein sequence ID" value="AAR36227"/>
    <property type="gene ID" value="GSU2834"/>
</dbReference>
<dbReference type="KEGG" id="gsu:GSU2834"/>
<dbReference type="PATRIC" id="fig|243231.5.peg.2859"/>
<dbReference type="eggNOG" id="COG0099">
    <property type="taxonomic scope" value="Bacteria"/>
</dbReference>
<dbReference type="HOGENOM" id="CLU_103849_1_2_7"/>
<dbReference type="InParanoid" id="Q749B0"/>
<dbReference type="OrthoDB" id="9803610at2"/>
<dbReference type="Proteomes" id="UP000000577">
    <property type="component" value="Chromosome"/>
</dbReference>
<dbReference type="GO" id="GO:0005829">
    <property type="term" value="C:cytosol"/>
    <property type="evidence" value="ECO:0000318"/>
    <property type="project" value="GO_Central"/>
</dbReference>
<dbReference type="GO" id="GO:0015935">
    <property type="term" value="C:small ribosomal subunit"/>
    <property type="evidence" value="ECO:0000318"/>
    <property type="project" value="GO_Central"/>
</dbReference>
<dbReference type="GO" id="GO:0019843">
    <property type="term" value="F:rRNA binding"/>
    <property type="evidence" value="ECO:0007669"/>
    <property type="project" value="UniProtKB-UniRule"/>
</dbReference>
<dbReference type="GO" id="GO:0003735">
    <property type="term" value="F:structural constituent of ribosome"/>
    <property type="evidence" value="ECO:0007669"/>
    <property type="project" value="InterPro"/>
</dbReference>
<dbReference type="GO" id="GO:0000049">
    <property type="term" value="F:tRNA binding"/>
    <property type="evidence" value="ECO:0007669"/>
    <property type="project" value="UniProtKB-UniRule"/>
</dbReference>
<dbReference type="GO" id="GO:0006412">
    <property type="term" value="P:translation"/>
    <property type="evidence" value="ECO:0007669"/>
    <property type="project" value="UniProtKB-UniRule"/>
</dbReference>
<dbReference type="FunFam" id="1.10.8.50:FF:000001">
    <property type="entry name" value="30S ribosomal protein S13"/>
    <property type="match status" value="1"/>
</dbReference>
<dbReference type="FunFam" id="4.10.910.10:FF:000001">
    <property type="entry name" value="30S ribosomal protein S13"/>
    <property type="match status" value="1"/>
</dbReference>
<dbReference type="Gene3D" id="1.10.8.50">
    <property type="match status" value="1"/>
</dbReference>
<dbReference type="Gene3D" id="4.10.910.10">
    <property type="entry name" value="30s ribosomal protein s13, domain 2"/>
    <property type="match status" value="1"/>
</dbReference>
<dbReference type="HAMAP" id="MF_01315">
    <property type="entry name" value="Ribosomal_uS13"/>
    <property type="match status" value="1"/>
</dbReference>
<dbReference type="InterPro" id="IPR027437">
    <property type="entry name" value="Rbsml_uS13_C"/>
</dbReference>
<dbReference type="InterPro" id="IPR001892">
    <property type="entry name" value="Ribosomal_uS13"/>
</dbReference>
<dbReference type="InterPro" id="IPR010979">
    <property type="entry name" value="Ribosomal_uS13-like_H2TH"/>
</dbReference>
<dbReference type="InterPro" id="IPR019980">
    <property type="entry name" value="Ribosomal_uS13_bac-type"/>
</dbReference>
<dbReference type="InterPro" id="IPR018269">
    <property type="entry name" value="Ribosomal_uS13_CS"/>
</dbReference>
<dbReference type="NCBIfam" id="TIGR03631">
    <property type="entry name" value="uS13_bact"/>
    <property type="match status" value="1"/>
</dbReference>
<dbReference type="PANTHER" id="PTHR10871">
    <property type="entry name" value="30S RIBOSOMAL PROTEIN S13/40S RIBOSOMAL PROTEIN S18"/>
    <property type="match status" value="1"/>
</dbReference>
<dbReference type="PANTHER" id="PTHR10871:SF1">
    <property type="entry name" value="SMALL RIBOSOMAL SUBUNIT PROTEIN US13M"/>
    <property type="match status" value="1"/>
</dbReference>
<dbReference type="Pfam" id="PF00416">
    <property type="entry name" value="Ribosomal_S13"/>
    <property type="match status" value="1"/>
</dbReference>
<dbReference type="PIRSF" id="PIRSF002134">
    <property type="entry name" value="Ribosomal_S13"/>
    <property type="match status" value="1"/>
</dbReference>
<dbReference type="SUPFAM" id="SSF46946">
    <property type="entry name" value="S13-like H2TH domain"/>
    <property type="match status" value="1"/>
</dbReference>
<dbReference type="PROSITE" id="PS00646">
    <property type="entry name" value="RIBOSOMAL_S13_1"/>
    <property type="match status" value="1"/>
</dbReference>
<dbReference type="PROSITE" id="PS50159">
    <property type="entry name" value="RIBOSOMAL_S13_2"/>
    <property type="match status" value="1"/>
</dbReference>
<proteinExistence type="inferred from homology"/>
<reference key="1">
    <citation type="journal article" date="2003" name="Science">
        <title>Genome of Geobacter sulfurreducens: metal reduction in subsurface environments.</title>
        <authorList>
            <person name="Methe B.A."/>
            <person name="Nelson K.E."/>
            <person name="Eisen J.A."/>
            <person name="Paulsen I.T."/>
            <person name="Nelson W.C."/>
            <person name="Heidelberg J.F."/>
            <person name="Wu D."/>
            <person name="Wu M."/>
            <person name="Ward N.L."/>
            <person name="Beanan M.J."/>
            <person name="Dodson R.J."/>
            <person name="Madupu R."/>
            <person name="Brinkac L.M."/>
            <person name="Daugherty S.C."/>
            <person name="DeBoy R.T."/>
            <person name="Durkin A.S."/>
            <person name="Gwinn M.L."/>
            <person name="Kolonay J.F."/>
            <person name="Sullivan S.A."/>
            <person name="Haft D.H."/>
            <person name="Selengut J."/>
            <person name="Davidsen T.M."/>
            <person name="Zafar N."/>
            <person name="White O."/>
            <person name="Tran B."/>
            <person name="Romero C."/>
            <person name="Forberger H.A."/>
            <person name="Weidman J.F."/>
            <person name="Khouri H.M."/>
            <person name="Feldblyum T.V."/>
            <person name="Utterback T.R."/>
            <person name="Van Aken S.E."/>
            <person name="Lovley D.R."/>
            <person name="Fraser C.M."/>
        </authorList>
    </citation>
    <scope>NUCLEOTIDE SEQUENCE [LARGE SCALE GENOMIC DNA]</scope>
    <source>
        <strain>ATCC 51573 / DSM 12127 / PCA</strain>
    </source>
</reference>
<name>RS13_GEOSL</name>
<evidence type="ECO:0000255" key="1">
    <source>
        <dbReference type="HAMAP-Rule" id="MF_01315"/>
    </source>
</evidence>
<evidence type="ECO:0000256" key="2">
    <source>
        <dbReference type="SAM" id="MobiDB-lite"/>
    </source>
</evidence>
<evidence type="ECO:0000305" key="3"/>
<feature type="chain" id="PRO_0000230510" description="Small ribosomal subunit protein uS13">
    <location>
        <begin position="1"/>
        <end position="122"/>
    </location>
</feature>
<feature type="region of interest" description="Disordered" evidence="2">
    <location>
        <begin position="97"/>
        <end position="122"/>
    </location>
</feature>
<keyword id="KW-1185">Reference proteome</keyword>
<keyword id="KW-0687">Ribonucleoprotein</keyword>
<keyword id="KW-0689">Ribosomal protein</keyword>
<keyword id="KW-0694">RNA-binding</keyword>
<keyword id="KW-0699">rRNA-binding</keyword>
<keyword id="KW-0820">tRNA-binding</keyword>
<comment type="function">
    <text evidence="1">Located at the top of the head of the 30S subunit, it contacts several helices of the 16S rRNA. In the 70S ribosome it contacts the 23S rRNA (bridge B1a) and protein L5 of the 50S subunit (bridge B1b), connecting the 2 subunits; these bridges are implicated in subunit movement. Contacts the tRNAs in the A and P-sites.</text>
</comment>
<comment type="subunit">
    <text evidence="1">Part of the 30S ribosomal subunit. Forms a loose heterodimer with protein S19. Forms two bridges to the 50S subunit in the 70S ribosome.</text>
</comment>
<comment type="similarity">
    <text evidence="1">Belongs to the universal ribosomal protein uS13 family.</text>
</comment>